<feature type="chain" id="PRO_0000079094" description="Nucleoprotein">
    <location>
        <begin position="1"/>
        <end position="498"/>
    </location>
</feature>
<feature type="region of interest" description="Disordered" evidence="2">
    <location>
        <begin position="1"/>
        <end position="21"/>
    </location>
</feature>
<feature type="short sequence motif" description="Unconventional nuclear localization signal" evidence="1">
    <location>
        <begin position="1"/>
        <end position="18"/>
    </location>
</feature>
<feature type="short sequence motif" description="Bipartite nuclear localization signal" evidence="1">
    <location>
        <begin position="198"/>
        <end position="216"/>
    </location>
</feature>
<feature type="compositionally biased region" description="Basic and acidic residues" evidence="2">
    <location>
        <begin position="8"/>
        <end position="21"/>
    </location>
</feature>
<protein>
    <recommendedName>
        <fullName evidence="1">Nucleoprotein</fullName>
    </recommendedName>
    <alternativeName>
        <fullName evidence="1">Nucleocapsid protein</fullName>
        <shortName evidence="1">Protein N</shortName>
    </alternativeName>
</protein>
<gene>
    <name evidence="1" type="primary">NP</name>
</gene>
<organismHost>
    <name type="scientific">Aves</name>
    <dbReference type="NCBI Taxonomy" id="8782"/>
</organismHost>
<organismHost>
    <name type="scientific">Cetacea</name>
    <name type="common">whales</name>
    <dbReference type="NCBI Taxonomy" id="9721"/>
</organismHost>
<organismHost>
    <name type="scientific">Homo sapiens</name>
    <name type="common">Human</name>
    <dbReference type="NCBI Taxonomy" id="9606"/>
</organismHost>
<organismHost>
    <name type="scientific">Phocidae</name>
    <name type="common">true seals</name>
    <dbReference type="NCBI Taxonomy" id="9709"/>
</organismHost>
<organismHost>
    <name type="scientific">Sus scrofa</name>
    <name type="common">Pig</name>
    <dbReference type="NCBI Taxonomy" id="9823"/>
</organismHost>
<accession>Q08042</accession>
<dbReference type="EMBL" id="L07357">
    <property type="protein sequence ID" value="AAA51513.1"/>
    <property type="molecule type" value="Genomic_RNA"/>
</dbReference>
<dbReference type="SMR" id="Q08042"/>
<dbReference type="GO" id="GO:0019029">
    <property type="term" value="C:helical viral capsid"/>
    <property type="evidence" value="ECO:0007669"/>
    <property type="project" value="UniProtKB-UniRule"/>
</dbReference>
<dbReference type="GO" id="GO:0043657">
    <property type="term" value="C:host cell"/>
    <property type="evidence" value="ECO:0007669"/>
    <property type="project" value="GOC"/>
</dbReference>
<dbReference type="GO" id="GO:0042025">
    <property type="term" value="C:host cell nucleus"/>
    <property type="evidence" value="ECO:0007669"/>
    <property type="project" value="UniProtKB-SubCell"/>
</dbReference>
<dbReference type="GO" id="GO:1990904">
    <property type="term" value="C:ribonucleoprotein complex"/>
    <property type="evidence" value="ECO:0007669"/>
    <property type="project" value="UniProtKB-KW"/>
</dbReference>
<dbReference type="GO" id="GO:0019013">
    <property type="term" value="C:viral nucleocapsid"/>
    <property type="evidence" value="ECO:0007669"/>
    <property type="project" value="UniProtKB-UniRule"/>
</dbReference>
<dbReference type="GO" id="GO:0003723">
    <property type="term" value="F:RNA binding"/>
    <property type="evidence" value="ECO:0007669"/>
    <property type="project" value="UniProtKB-UniRule"/>
</dbReference>
<dbReference type="GO" id="GO:0005198">
    <property type="term" value="F:structural molecule activity"/>
    <property type="evidence" value="ECO:0007669"/>
    <property type="project" value="UniProtKB-UniRule"/>
</dbReference>
<dbReference type="GO" id="GO:0046718">
    <property type="term" value="P:symbiont entry into host cell"/>
    <property type="evidence" value="ECO:0007669"/>
    <property type="project" value="UniProtKB-KW"/>
</dbReference>
<dbReference type="GO" id="GO:0075732">
    <property type="term" value="P:viral penetration into host nucleus"/>
    <property type="evidence" value="ECO:0007669"/>
    <property type="project" value="UniProtKB-UniRule"/>
</dbReference>
<dbReference type="HAMAP" id="MF_04070">
    <property type="entry name" value="INFV_NCAP"/>
    <property type="match status" value="1"/>
</dbReference>
<dbReference type="InterPro" id="IPR002141">
    <property type="entry name" value="Flu_NP"/>
</dbReference>
<dbReference type="Pfam" id="PF00506">
    <property type="entry name" value="Flu_NP"/>
    <property type="match status" value="1"/>
</dbReference>
<dbReference type="SUPFAM" id="SSF161003">
    <property type="entry name" value="flu NP-like"/>
    <property type="match status" value="1"/>
</dbReference>
<keyword id="KW-0167">Capsid protein</keyword>
<keyword id="KW-1139">Helical capsid protein</keyword>
<keyword id="KW-1048">Host nucleus</keyword>
<keyword id="KW-0945">Host-virus interaction</keyword>
<keyword id="KW-0687">Ribonucleoprotein</keyword>
<keyword id="KW-0694">RNA-binding</keyword>
<keyword id="KW-0543">Viral nucleoprotein</keyword>
<keyword id="KW-1163">Viral penetration into host nucleus</keyword>
<keyword id="KW-0946">Virion</keyword>
<keyword id="KW-1160">Virus entry into host cell</keyword>
<sequence>MASQGTKRSYEQMETDGERQNATEIRASVGKMIDGIGRFYIQMCTELKLSDYEGRLIQNSLTVERMVLSAFDERRNRYLEEHPSAGKDPKKTGGPIYKRVGGRWMRELVLYDKEEIRRIWRQANNGDDATRGLTHMMIWHSNLNDTTYQRTRALVRTGMDPRMCSLMQGSTLPRRSGAAGAAVKGIGTMVMELIRMIKRGINDRNFWRGENGRKTRIAYERMCNILKGKFQTAAQRAMMDQVRESRNPGNAEIEDLIFSARSALILRGSVAHKSCLPACVYGPAVSSGYDFEKEGYSLVGIDPFKLLQNSQVYSLIRPNENPAHKSQLVWMACHSAAFEDLRLLSFIRGTKVSPRGKLSTRGVQIASNENMDNMESSTLELRSRYWAIRTRSGGNTNQQRASAGQISVQPTFSVQRNLPFEKSTVMAAFTGNTEGRTSDMRAEIIRMMEGAKPEEVSFRGRGVFELSDEKATNPIVPSFDMSNEGSYFFGDNAEEYDN</sequence>
<name>NCAP_I90A0</name>
<evidence type="ECO:0000255" key="1">
    <source>
        <dbReference type="HAMAP-Rule" id="MF_04070"/>
    </source>
</evidence>
<evidence type="ECO:0000256" key="2">
    <source>
        <dbReference type="SAM" id="MobiDB-lite"/>
    </source>
</evidence>
<organism>
    <name type="scientific">Influenza A virus (strain A/Shanghai/6/1990 H3N2)</name>
    <dbReference type="NCBI Taxonomy" id="383570"/>
    <lineage>
        <taxon>Viruses</taxon>
        <taxon>Riboviria</taxon>
        <taxon>Orthornavirae</taxon>
        <taxon>Negarnaviricota</taxon>
        <taxon>Polyploviricotina</taxon>
        <taxon>Insthoviricetes</taxon>
        <taxon>Articulavirales</taxon>
        <taxon>Orthomyxoviridae</taxon>
        <taxon>Alphainfluenzavirus</taxon>
        <taxon>Alphainfluenzavirus influenzae</taxon>
        <taxon>Influenza A virus</taxon>
    </lineage>
</organism>
<reference key="1">
    <citation type="journal article" date="1993" name="J. Virol.">
        <title>Analysis of the evolution and variation of the human influenza A virus nucleoprotein gene from 1933 to 1990.</title>
        <authorList>
            <person name="Shu L.L."/>
            <person name="Bean W.J."/>
            <person name="Webster R.G."/>
        </authorList>
    </citation>
    <scope>NUCLEOTIDE SEQUENCE [GENOMIC RNA]</scope>
</reference>
<proteinExistence type="inferred from homology"/>
<comment type="function">
    <text evidence="1">Encapsidates the negative strand viral RNA, protecting it from nucleases. The encapsidated genomic RNA is termed the ribonucleoprotein (RNP) and serves as template for transcription and replication. The RNP needs to be localized in the host nucleus to start an infectious cycle, but is too large to diffuse through the nuclear pore complex. NP comprises at least 2 nuclear localization signals that are responsible for the active RNP import into the nucleus through cellular importin alpha/beta pathway. Later in the infection, nclear export of RNPs are mediated through viral proteins NEP interacting with M1 which binds nucleoproteins. It is possible that nucleoprotein binds directly host exportin-1/XPO1 and plays an active role in RNPs nuclear export. M1 interaction with RNP seems to hide nucleoprotein's nuclear localization signals. Soon after a virion infects a new cell, M1 dissociates from the RNP under acidification of the virion driven by M2 protein. Dissociation of M1 from RNP unmasks nucleoprotein's nuclear localization signals, targeting the RNP to the nucleus.</text>
</comment>
<comment type="subunit">
    <text evidence="1">Homomultimerizes to form the nucleocapsid. May bind host exportin-1/XPO1. Binds to viral genomic RNA. Protein-RNA contacts are mediated by a combination of electrostatic interactions between positively charged residues and the phosphate backbone and planar interactions between aromatic side chains and bases.</text>
</comment>
<comment type="subcellular location">
    <subcellularLocation>
        <location evidence="1">Virion</location>
    </subcellularLocation>
    <subcellularLocation>
        <location evidence="1">Host nucleus</location>
    </subcellularLocation>
</comment>
<comment type="PTM">
    <text evidence="1">Late in virus-infected cells, may be cleaved from a 56-kDa protein to a 53-kDa protein by a cellular caspase. This cleavage might be a marker for the onset of apoptosis in infected cells or have a specific function in virus host interaction.</text>
</comment>
<comment type="similarity">
    <text evidence="1">Belongs to the influenza viruses nucleoprotein family.</text>
</comment>